<dbReference type="EMBL" id="Z93380">
    <property type="protein sequence ID" value="CAB07596.1"/>
    <property type="molecule type" value="Genomic_DNA"/>
</dbReference>
<dbReference type="PIR" id="T21472">
    <property type="entry name" value="T21472"/>
</dbReference>
<dbReference type="RefSeq" id="NP_493214.1">
    <property type="nucleotide sequence ID" value="NM_060813.1"/>
</dbReference>
<dbReference type="BioGRID" id="49833">
    <property type="interactions" value="1"/>
</dbReference>
<dbReference type="FunCoup" id="O18689">
    <property type="interactions" value="9"/>
</dbReference>
<dbReference type="PaxDb" id="6239-F28C12.2"/>
<dbReference type="EnsemblMetazoa" id="F28C12.2.1">
    <property type="protein sequence ID" value="F28C12.2.1"/>
    <property type="gene ID" value="WBGene00005044"/>
</dbReference>
<dbReference type="GeneID" id="185054"/>
<dbReference type="KEGG" id="cel:CELE_F28C12.2"/>
<dbReference type="UCSC" id="F28C12.2">
    <property type="organism name" value="c. elegans"/>
</dbReference>
<dbReference type="AGR" id="WB:WBGene00005044"/>
<dbReference type="CTD" id="185054"/>
<dbReference type="WormBase" id="F28C12.2">
    <property type="protein sequence ID" value="CE09749"/>
    <property type="gene ID" value="WBGene00005044"/>
    <property type="gene designation" value="sra-18"/>
</dbReference>
<dbReference type="eggNOG" id="ENOG502THAY">
    <property type="taxonomic scope" value="Eukaryota"/>
</dbReference>
<dbReference type="GeneTree" id="ENSGT00970000195862"/>
<dbReference type="HOGENOM" id="CLU_070413_0_0_1"/>
<dbReference type="InParanoid" id="O18689"/>
<dbReference type="OrthoDB" id="5855692at2759"/>
<dbReference type="PhylomeDB" id="O18689"/>
<dbReference type="PRO" id="PR:O18689"/>
<dbReference type="Proteomes" id="UP000001940">
    <property type="component" value="Chromosome I"/>
</dbReference>
<dbReference type="Bgee" id="WBGene00005044">
    <property type="expression patterns" value="Expressed in adult organism"/>
</dbReference>
<dbReference type="GO" id="GO:0016020">
    <property type="term" value="C:membrane"/>
    <property type="evidence" value="ECO:0007669"/>
    <property type="project" value="UniProtKB-SubCell"/>
</dbReference>
<dbReference type="GO" id="GO:0004930">
    <property type="term" value="F:G protein-coupled receptor activity"/>
    <property type="evidence" value="ECO:0007669"/>
    <property type="project" value="InterPro"/>
</dbReference>
<dbReference type="GO" id="GO:0007606">
    <property type="term" value="P:sensory perception of chemical stimulus"/>
    <property type="evidence" value="ECO:0007669"/>
    <property type="project" value="InterPro"/>
</dbReference>
<dbReference type="InterPro" id="IPR000344">
    <property type="entry name" value="7TM_GPCR_serpentine_rcpt_Sra"/>
</dbReference>
<dbReference type="PANTHER" id="PTHR31582:SF2">
    <property type="entry name" value="G-PROTEIN COUPLED RECEPTORS FAMILY 1 PROFILE DOMAIN-CONTAINING PROTEIN-RELATED"/>
    <property type="match status" value="1"/>
</dbReference>
<dbReference type="PANTHER" id="PTHR31582">
    <property type="entry name" value="SERPENTINE RECEPTOR, CLASS A (ALPHA)-RELATED-RELATED"/>
    <property type="match status" value="1"/>
</dbReference>
<dbReference type="Pfam" id="PF02117">
    <property type="entry name" value="7TM_GPCR_Sra"/>
    <property type="match status" value="1"/>
</dbReference>
<dbReference type="PRINTS" id="PR00697">
    <property type="entry name" value="TMPROTEINSRA"/>
</dbReference>
<keyword id="KW-0472">Membrane</keyword>
<keyword id="KW-1185">Reference proteome</keyword>
<keyword id="KW-0812">Transmembrane</keyword>
<keyword id="KW-1133">Transmembrane helix</keyword>
<proteinExistence type="inferred from homology"/>
<evidence type="ECO:0000255" key="1"/>
<evidence type="ECO:0000305" key="2"/>
<gene>
    <name type="primary">sra-18</name>
    <name type="ORF">F28C12.2</name>
</gene>
<organism>
    <name type="scientific">Caenorhabditis elegans</name>
    <dbReference type="NCBI Taxonomy" id="6239"/>
    <lineage>
        <taxon>Eukaryota</taxon>
        <taxon>Metazoa</taxon>
        <taxon>Ecdysozoa</taxon>
        <taxon>Nematoda</taxon>
        <taxon>Chromadorea</taxon>
        <taxon>Rhabditida</taxon>
        <taxon>Rhabditina</taxon>
        <taxon>Rhabditomorpha</taxon>
        <taxon>Rhabditoidea</taxon>
        <taxon>Rhabditidae</taxon>
        <taxon>Peloderinae</taxon>
        <taxon>Caenorhabditis</taxon>
    </lineage>
</organism>
<reference key="1">
    <citation type="journal article" date="1998" name="Science">
        <title>Genome sequence of the nematode C. elegans: a platform for investigating biology.</title>
        <authorList>
            <consortium name="The C. elegans sequencing consortium"/>
        </authorList>
    </citation>
    <scope>NUCLEOTIDE SEQUENCE [LARGE SCALE GENOMIC DNA]</scope>
    <source>
        <strain>Bristol N2</strain>
    </source>
</reference>
<sequence length="340" mass="39225">MNKTAEELDSRNCASESLTNALISITMKFNFIFIITVVLISYCFTWLAIQALWKHNIFSNSTRLILIVCLLNSVVHQTTMLETRITQAYRSVVYDSEPCKLLFRSSDCVFELYLYYPTGYFSTYSVFSLTFDRLISHYKSRYYHMHQYFIATSLLVLQLLLTMFSFYIVFYGVSLAGYVPMCNFRPELTVYYGAINNVRTGVMVSCIIVTMFVYYVCVKSEKQIQKCSYSPGERYSAYENVTTSQSICISIVLQFSCIMISSFGSNLLIHITSKTTVSEEVFYAIVSFLPGVTYANLCLPLVIYFKTKLTTRNRKNRIAVMTSMYGDAGEHIDRLKRSWE</sequence>
<comment type="subcellular location">
    <subcellularLocation>
        <location evidence="2">Membrane</location>
        <topology evidence="2">Multi-pass membrane protein</topology>
    </subcellularLocation>
</comment>
<comment type="similarity">
    <text evidence="2">Belongs to the nematode receptor-like protein sra family.</text>
</comment>
<name>SRA18_CAEEL</name>
<feature type="chain" id="PRO_0000104481" description="Serpentine receptor class alpha-18">
    <location>
        <begin position="1"/>
        <end position="340"/>
    </location>
</feature>
<feature type="transmembrane region" description="Helical" evidence="1">
    <location>
        <begin position="29"/>
        <end position="49"/>
    </location>
</feature>
<feature type="transmembrane region" description="Helical" evidence="1">
    <location>
        <begin position="109"/>
        <end position="129"/>
    </location>
</feature>
<feature type="transmembrane region" description="Helical" evidence="1">
    <location>
        <begin position="149"/>
        <end position="169"/>
    </location>
</feature>
<feature type="transmembrane region" description="Helical" evidence="1">
    <location>
        <begin position="198"/>
        <end position="218"/>
    </location>
</feature>
<feature type="transmembrane region" description="Helical" evidence="1">
    <location>
        <begin position="249"/>
        <end position="269"/>
    </location>
</feature>
<feature type="transmembrane region" description="Helical" evidence="1">
    <location>
        <begin position="285"/>
        <end position="305"/>
    </location>
</feature>
<protein>
    <recommendedName>
        <fullName>Serpentine receptor class alpha-18</fullName>
        <shortName>Protein sra-18</shortName>
    </recommendedName>
</protein>
<accession>O18689</accession>